<protein>
    <recommendedName>
        <fullName evidence="1">Protein RecA</fullName>
    </recommendedName>
    <alternativeName>
        <fullName evidence="1">Recombinase A</fullName>
    </alternativeName>
</protein>
<comment type="function">
    <text evidence="1">Can catalyze the hydrolysis of ATP in the presence of single-stranded DNA, the ATP-dependent uptake of single-stranded DNA by duplex DNA, and the ATP-dependent hybridization of homologous single-stranded DNAs. It interacts with LexA causing its activation and leading to its autocatalytic cleavage.</text>
</comment>
<comment type="subcellular location">
    <subcellularLocation>
        <location evidence="1">Cytoplasm</location>
    </subcellularLocation>
</comment>
<comment type="similarity">
    <text evidence="1">Belongs to the RecA family.</text>
</comment>
<gene>
    <name evidence="1" type="primary">recA</name>
    <name type="ordered locus">CV_1607</name>
</gene>
<dbReference type="EMBL" id="AE016825">
    <property type="protein sequence ID" value="AAQ59283.1"/>
    <property type="molecule type" value="Genomic_DNA"/>
</dbReference>
<dbReference type="RefSeq" id="WP_011135159.1">
    <property type="nucleotide sequence ID" value="NC_005085.1"/>
</dbReference>
<dbReference type="SMR" id="Q7NXL9"/>
<dbReference type="STRING" id="243365.CV_1607"/>
<dbReference type="KEGG" id="cvi:CV_1607"/>
<dbReference type="eggNOG" id="COG0468">
    <property type="taxonomic scope" value="Bacteria"/>
</dbReference>
<dbReference type="HOGENOM" id="CLU_040469_3_2_4"/>
<dbReference type="OrthoDB" id="9776733at2"/>
<dbReference type="Proteomes" id="UP000001424">
    <property type="component" value="Chromosome"/>
</dbReference>
<dbReference type="GO" id="GO:0005829">
    <property type="term" value="C:cytosol"/>
    <property type="evidence" value="ECO:0007669"/>
    <property type="project" value="TreeGrafter"/>
</dbReference>
<dbReference type="GO" id="GO:0005524">
    <property type="term" value="F:ATP binding"/>
    <property type="evidence" value="ECO:0007669"/>
    <property type="project" value="UniProtKB-UniRule"/>
</dbReference>
<dbReference type="GO" id="GO:0016887">
    <property type="term" value="F:ATP hydrolysis activity"/>
    <property type="evidence" value="ECO:0007669"/>
    <property type="project" value="InterPro"/>
</dbReference>
<dbReference type="GO" id="GO:0140664">
    <property type="term" value="F:ATP-dependent DNA damage sensor activity"/>
    <property type="evidence" value="ECO:0007669"/>
    <property type="project" value="InterPro"/>
</dbReference>
<dbReference type="GO" id="GO:0003684">
    <property type="term" value="F:damaged DNA binding"/>
    <property type="evidence" value="ECO:0007669"/>
    <property type="project" value="UniProtKB-UniRule"/>
</dbReference>
<dbReference type="GO" id="GO:0003697">
    <property type="term" value="F:single-stranded DNA binding"/>
    <property type="evidence" value="ECO:0007669"/>
    <property type="project" value="UniProtKB-UniRule"/>
</dbReference>
<dbReference type="GO" id="GO:0006310">
    <property type="term" value="P:DNA recombination"/>
    <property type="evidence" value="ECO:0007669"/>
    <property type="project" value="UniProtKB-UniRule"/>
</dbReference>
<dbReference type="GO" id="GO:0006281">
    <property type="term" value="P:DNA repair"/>
    <property type="evidence" value="ECO:0007669"/>
    <property type="project" value="UniProtKB-UniRule"/>
</dbReference>
<dbReference type="GO" id="GO:0009432">
    <property type="term" value="P:SOS response"/>
    <property type="evidence" value="ECO:0007669"/>
    <property type="project" value="UniProtKB-UniRule"/>
</dbReference>
<dbReference type="CDD" id="cd00983">
    <property type="entry name" value="RecA"/>
    <property type="match status" value="1"/>
</dbReference>
<dbReference type="FunFam" id="3.40.50.300:FF:000087">
    <property type="entry name" value="Recombinase RecA"/>
    <property type="match status" value="1"/>
</dbReference>
<dbReference type="Gene3D" id="3.40.50.300">
    <property type="entry name" value="P-loop containing nucleotide triphosphate hydrolases"/>
    <property type="match status" value="1"/>
</dbReference>
<dbReference type="HAMAP" id="MF_00268">
    <property type="entry name" value="RecA"/>
    <property type="match status" value="1"/>
</dbReference>
<dbReference type="InterPro" id="IPR003593">
    <property type="entry name" value="AAA+_ATPase"/>
</dbReference>
<dbReference type="InterPro" id="IPR013765">
    <property type="entry name" value="DNA_recomb/repair_RecA"/>
</dbReference>
<dbReference type="InterPro" id="IPR020584">
    <property type="entry name" value="DNA_recomb/repair_RecA_CS"/>
</dbReference>
<dbReference type="InterPro" id="IPR027417">
    <property type="entry name" value="P-loop_NTPase"/>
</dbReference>
<dbReference type="InterPro" id="IPR049261">
    <property type="entry name" value="RecA-like_C"/>
</dbReference>
<dbReference type="InterPro" id="IPR049428">
    <property type="entry name" value="RecA-like_N"/>
</dbReference>
<dbReference type="InterPro" id="IPR020588">
    <property type="entry name" value="RecA_ATP-bd"/>
</dbReference>
<dbReference type="InterPro" id="IPR023400">
    <property type="entry name" value="RecA_C_sf"/>
</dbReference>
<dbReference type="InterPro" id="IPR020587">
    <property type="entry name" value="RecA_monomer-monomer_interface"/>
</dbReference>
<dbReference type="NCBIfam" id="TIGR02012">
    <property type="entry name" value="tigrfam_recA"/>
    <property type="match status" value="1"/>
</dbReference>
<dbReference type="PANTHER" id="PTHR45900:SF1">
    <property type="entry name" value="MITOCHONDRIAL DNA REPAIR PROTEIN RECA HOMOLOG-RELATED"/>
    <property type="match status" value="1"/>
</dbReference>
<dbReference type="PANTHER" id="PTHR45900">
    <property type="entry name" value="RECA"/>
    <property type="match status" value="1"/>
</dbReference>
<dbReference type="Pfam" id="PF00154">
    <property type="entry name" value="RecA"/>
    <property type="match status" value="1"/>
</dbReference>
<dbReference type="Pfam" id="PF21096">
    <property type="entry name" value="RecA_C"/>
    <property type="match status" value="1"/>
</dbReference>
<dbReference type="PRINTS" id="PR00142">
    <property type="entry name" value="RECA"/>
</dbReference>
<dbReference type="SMART" id="SM00382">
    <property type="entry name" value="AAA"/>
    <property type="match status" value="1"/>
</dbReference>
<dbReference type="SUPFAM" id="SSF52540">
    <property type="entry name" value="P-loop containing nucleoside triphosphate hydrolases"/>
    <property type="match status" value="1"/>
</dbReference>
<dbReference type="SUPFAM" id="SSF54752">
    <property type="entry name" value="RecA protein, C-terminal domain"/>
    <property type="match status" value="1"/>
</dbReference>
<dbReference type="PROSITE" id="PS00321">
    <property type="entry name" value="RECA_1"/>
    <property type="match status" value="1"/>
</dbReference>
<dbReference type="PROSITE" id="PS50162">
    <property type="entry name" value="RECA_2"/>
    <property type="match status" value="1"/>
</dbReference>
<dbReference type="PROSITE" id="PS50163">
    <property type="entry name" value="RECA_3"/>
    <property type="match status" value="1"/>
</dbReference>
<proteinExistence type="inferred from homology"/>
<reference key="1">
    <citation type="journal article" date="2003" name="Proc. Natl. Acad. Sci. U.S.A.">
        <title>The complete genome sequence of Chromobacterium violaceum reveals remarkable and exploitable bacterial adaptability.</title>
        <authorList>
            <person name="Vasconcelos A.T.R."/>
            <person name="de Almeida D.F."/>
            <person name="Hungria M."/>
            <person name="Guimaraes C.T."/>
            <person name="Antonio R.V."/>
            <person name="Almeida F.C."/>
            <person name="de Almeida L.G.P."/>
            <person name="de Almeida R."/>
            <person name="Alves-Gomes J.A."/>
            <person name="Andrade E.M."/>
            <person name="Araripe J."/>
            <person name="de Araujo M.F.F."/>
            <person name="Astolfi-Filho S."/>
            <person name="Azevedo V."/>
            <person name="Baptista A.J."/>
            <person name="Bataus L.A.M."/>
            <person name="Batista J.S."/>
            <person name="Belo A."/>
            <person name="van den Berg C."/>
            <person name="Bogo M."/>
            <person name="Bonatto S."/>
            <person name="Bordignon J."/>
            <person name="Brigido M.M."/>
            <person name="Brito C.A."/>
            <person name="Brocchi M."/>
            <person name="Burity H.A."/>
            <person name="Camargo A.A."/>
            <person name="Cardoso D.D.P."/>
            <person name="Carneiro N.P."/>
            <person name="Carraro D.M."/>
            <person name="Carvalho C.M.B."/>
            <person name="Cascardo J.C.M."/>
            <person name="Cavada B.S."/>
            <person name="Chueire L.M.O."/>
            <person name="Creczynski-Pasa T.B."/>
            <person name="Cunha-Junior N.C."/>
            <person name="Fagundes N."/>
            <person name="Falcao C.L."/>
            <person name="Fantinatti F."/>
            <person name="Farias I.P."/>
            <person name="Felipe M.S.S."/>
            <person name="Ferrari L.P."/>
            <person name="Ferro J.A."/>
            <person name="Ferro M.I.T."/>
            <person name="Franco G.R."/>
            <person name="Freitas N.S.A."/>
            <person name="Furlan L.R."/>
            <person name="Gazzinelli R.T."/>
            <person name="Gomes E.A."/>
            <person name="Goncalves P.R."/>
            <person name="Grangeiro T.B."/>
            <person name="Grattapaglia D."/>
            <person name="Grisard E.C."/>
            <person name="Hanna E.S."/>
            <person name="Jardim S.N."/>
            <person name="Laurino J."/>
            <person name="Leoi L.C.T."/>
            <person name="Lima L.F.A."/>
            <person name="Loureiro M.F."/>
            <person name="Lyra M.C.C.P."/>
            <person name="Madeira H.M.F."/>
            <person name="Manfio G.P."/>
            <person name="Maranhao A.Q."/>
            <person name="Martins W.S."/>
            <person name="di Mauro S.M.Z."/>
            <person name="de Medeiros S.R.B."/>
            <person name="Meissner R.V."/>
            <person name="Moreira M.A.M."/>
            <person name="Nascimento F.F."/>
            <person name="Nicolas M.F."/>
            <person name="Oliveira J.G."/>
            <person name="Oliveira S.C."/>
            <person name="Paixao R.F.C."/>
            <person name="Parente J.A."/>
            <person name="Pedrosa F.O."/>
            <person name="Pena S.D.J."/>
            <person name="Pereira J.O."/>
            <person name="Pereira M."/>
            <person name="Pinto L.S.R.C."/>
            <person name="Pinto L.S."/>
            <person name="Porto J.I.R."/>
            <person name="Potrich D.P."/>
            <person name="Ramalho-Neto C.E."/>
            <person name="Reis A.M.M."/>
            <person name="Rigo L.U."/>
            <person name="Rondinelli E."/>
            <person name="Santos E.B.P."/>
            <person name="Santos F.R."/>
            <person name="Schneider M.P.C."/>
            <person name="Seuanez H.N."/>
            <person name="Silva A.M.R."/>
            <person name="da Silva A.L.C."/>
            <person name="Silva D.W."/>
            <person name="Silva R."/>
            <person name="Simoes I.C."/>
            <person name="Simon D."/>
            <person name="Soares C.M.A."/>
            <person name="Soares R.B.A."/>
            <person name="Souza E.M."/>
            <person name="Souza K.R.L."/>
            <person name="Souza R.C."/>
            <person name="Steffens M.B.R."/>
            <person name="Steindel M."/>
            <person name="Teixeira S.R."/>
            <person name="Urmenyi T."/>
            <person name="Vettore A."/>
            <person name="Wassem R."/>
            <person name="Zaha A."/>
            <person name="Simpson A.J.G."/>
        </authorList>
    </citation>
    <scope>NUCLEOTIDE SEQUENCE [LARGE SCALE GENOMIC DNA]</scope>
    <source>
        <strain>ATCC 12472 / DSM 30191 / JCM 1249 / CCUG 213 / NBRC 12614 / NCIMB 9131 / NCTC 9757 / MK</strain>
    </source>
</reference>
<name>RECA_CHRVO</name>
<sequence>MASEDKSKALAAALAQIEKQFGKGSIMRMSDNQITENLQVISTGSLTLDLALGVGGLPRGRVVEIYGPESSGKTTLCLQAVAEAQKLGGTCAYIDAENALDPVYAQKLGVNVEDLLISQPDTGEQALEICDMLVRSSGVDVIVVDSVAALVPKAEIEGEMGDSHVGLQARLMSQALRKLTGNIKRTNTLVIFINQIRMKIGVMFGNPETTTGGNALKFYASVRLDIRRTGGIKKGDEVIGNDTRVKVVKNKVSPPFRQADFEILYGEGISRQGEIIELGVKHGFIDKSGAWYAYNGQKIGQGKDNTREWLKANPAIADEIERKIREAVGVKIEINENQGDEEFADDAFDA</sequence>
<organism>
    <name type="scientific">Chromobacterium violaceum (strain ATCC 12472 / DSM 30191 / JCM 1249 / CCUG 213 / NBRC 12614 / NCIMB 9131 / NCTC 9757 / MK)</name>
    <dbReference type="NCBI Taxonomy" id="243365"/>
    <lineage>
        <taxon>Bacteria</taxon>
        <taxon>Pseudomonadati</taxon>
        <taxon>Pseudomonadota</taxon>
        <taxon>Betaproteobacteria</taxon>
        <taxon>Neisseriales</taxon>
        <taxon>Chromobacteriaceae</taxon>
        <taxon>Chromobacterium</taxon>
    </lineage>
</organism>
<evidence type="ECO:0000255" key="1">
    <source>
        <dbReference type="HAMAP-Rule" id="MF_00268"/>
    </source>
</evidence>
<accession>Q7NXL9</accession>
<feature type="chain" id="PRO_0000122689" description="Protein RecA">
    <location>
        <begin position="1"/>
        <end position="350"/>
    </location>
</feature>
<feature type="binding site" evidence="1">
    <location>
        <begin position="67"/>
        <end position="74"/>
    </location>
    <ligand>
        <name>ATP</name>
        <dbReference type="ChEBI" id="CHEBI:30616"/>
    </ligand>
</feature>
<keyword id="KW-0067">ATP-binding</keyword>
<keyword id="KW-0963">Cytoplasm</keyword>
<keyword id="KW-0227">DNA damage</keyword>
<keyword id="KW-0233">DNA recombination</keyword>
<keyword id="KW-0234">DNA repair</keyword>
<keyword id="KW-0238">DNA-binding</keyword>
<keyword id="KW-0547">Nucleotide-binding</keyword>
<keyword id="KW-1185">Reference proteome</keyword>
<keyword id="KW-0742">SOS response</keyword>